<protein>
    <recommendedName>
        <fullName evidence="1">Bifunctional protein FolD</fullName>
    </recommendedName>
    <domain>
        <recommendedName>
            <fullName evidence="1">Methylenetetrahydrofolate dehydrogenase</fullName>
            <ecNumber evidence="1">1.5.1.5</ecNumber>
        </recommendedName>
    </domain>
    <domain>
        <recommendedName>
            <fullName evidence="1">Methenyltetrahydrofolate cyclohydrolase</fullName>
            <ecNumber evidence="1">3.5.4.9</ecNumber>
        </recommendedName>
    </domain>
</protein>
<keyword id="KW-0028">Amino-acid biosynthesis</keyword>
<keyword id="KW-0368">Histidine biosynthesis</keyword>
<keyword id="KW-0378">Hydrolase</keyword>
<keyword id="KW-0486">Methionine biosynthesis</keyword>
<keyword id="KW-0511">Multifunctional enzyme</keyword>
<keyword id="KW-0521">NADP</keyword>
<keyword id="KW-0554">One-carbon metabolism</keyword>
<keyword id="KW-0560">Oxidoreductase</keyword>
<keyword id="KW-0658">Purine biosynthesis</keyword>
<keyword id="KW-1185">Reference proteome</keyword>
<reference key="1">
    <citation type="journal article" date="2009" name="PLoS ONE">
        <title>Complete genome sequence of the aerobic CO-oxidizing thermophile Thermomicrobium roseum.</title>
        <authorList>
            <person name="Wu D."/>
            <person name="Raymond J."/>
            <person name="Wu M."/>
            <person name="Chatterji S."/>
            <person name="Ren Q."/>
            <person name="Graham J.E."/>
            <person name="Bryant D.A."/>
            <person name="Robb F."/>
            <person name="Colman A."/>
            <person name="Tallon L.J."/>
            <person name="Badger J.H."/>
            <person name="Madupu R."/>
            <person name="Ward N.L."/>
            <person name="Eisen J.A."/>
        </authorList>
    </citation>
    <scope>NUCLEOTIDE SEQUENCE [LARGE SCALE GENOMIC DNA]</scope>
    <source>
        <strain>ATCC 27502 / DSM 5159 / P-2</strain>
    </source>
</reference>
<feature type="chain" id="PRO_1000215609" description="Bifunctional protein FolD">
    <location>
        <begin position="1"/>
        <end position="288"/>
    </location>
</feature>
<feature type="binding site" evidence="1">
    <location>
        <begin position="164"/>
        <end position="166"/>
    </location>
    <ligand>
        <name>NADP(+)</name>
        <dbReference type="ChEBI" id="CHEBI:58349"/>
    </ligand>
</feature>
<feature type="binding site" evidence="1">
    <location>
        <position position="230"/>
    </location>
    <ligand>
        <name>NADP(+)</name>
        <dbReference type="ChEBI" id="CHEBI:58349"/>
    </ligand>
</feature>
<sequence>MAAHILSGRPVVESLHARIQQVLARRAPHQGPPTLTVLLPNDPSAQAYARAIRKQFTTLSLNYRTEEIDDTLDESRFAILLKRLAEDESVTGILALQPLPKGVSRRSLARLMPPTKDVDGVSFEQQGRLAIGSPWIAPSTPLGGLILLQHYGIEVAGRHAVVIGRSPVVGRPLALLLLARDATVTICHRRTPDLAKLTRQADLLFVAAGQPHLVKPDMVAPGAVVIDFGVSVRDGRLIGDVDPAVAEVASALTPVPGGTGPVTTAVLALNLLRLAGLLEENDLFPGAP</sequence>
<comment type="function">
    <text evidence="1">Catalyzes the oxidation of 5,10-methylenetetrahydrofolate to 5,10-methenyltetrahydrofolate and then the hydrolysis of 5,10-methenyltetrahydrofolate to 10-formyltetrahydrofolate.</text>
</comment>
<comment type="catalytic activity">
    <reaction evidence="1">
        <text>(6R)-5,10-methylene-5,6,7,8-tetrahydrofolate + NADP(+) = (6R)-5,10-methenyltetrahydrofolate + NADPH</text>
        <dbReference type="Rhea" id="RHEA:22812"/>
        <dbReference type="ChEBI" id="CHEBI:15636"/>
        <dbReference type="ChEBI" id="CHEBI:57455"/>
        <dbReference type="ChEBI" id="CHEBI:57783"/>
        <dbReference type="ChEBI" id="CHEBI:58349"/>
        <dbReference type="EC" id="1.5.1.5"/>
    </reaction>
</comment>
<comment type="catalytic activity">
    <reaction evidence="1">
        <text>(6R)-5,10-methenyltetrahydrofolate + H2O = (6R)-10-formyltetrahydrofolate + H(+)</text>
        <dbReference type="Rhea" id="RHEA:23700"/>
        <dbReference type="ChEBI" id="CHEBI:15377"/>
        <dbReference type="ChEBI" id="CHEBI:15378"/>
        <dbReference type="ChEBI" id="CHEBI:57455"/>
        <dbReference type="ChEBI" id="CHEBI:195366"/>
        <dbReference type="EC" id="3.5.4.9"/>
    </reaction>
</comment>
<comment type="pathway">
    <text evidence="1">One-carbon metabolism; tetrahydrofolate interconversion.</text>
</comment>
<comment type="subunit">
    <text evidence="1">Homodimer.</text>
</comment>
<comment type="similarity">
    <text evidence="1">Belongs to the tetrahydrofolate dehydrogenase/cyclohydrolase family.</text>
</comment>
<evidence type="ECO:0000255" key="1">
    <source>
        <dbReference type="HAMAP-Rule" id="MF_01576"/>
    </source>
</evidence>
<organism>
    <name type="scientific">Thermomicrobium roseum (strain ATCC 27502 / DSM 5159 / P-2)</name>
    <dbReference type="NCBI Taxonomy" id="309801"/>
    <lineage>
        <taxon>Bacteria</taxon>
        <taxon>Pseudomonadati</taxon>
        <taxon>Thermomicrobiota</taxon>
        <taxon>Thermomicrobia</taxon>
        <taxon>Thermomicrobiales</taxon>
        <taxon>Thermomicrobiaceae</taxon>
        <taxon>Thermomicrobium</taxon>
    </lineage>
</organism>
<accession>B9KZ23</accession>
<name>FOLD_THERP</name>
<dbReference type="EC" id="1.5.1.5" evidence="1"/>
<dbReference type="EC" id="3.5.4.9" evidence="1"/>
<dbReference type="EMBL" id="CP001275">
    <property type="protein sequence ID" value="ACM04949.1"/>
    <property type="molecule type" value="Genomic_DNA"/>
</dbReference>
<dbReference type="RefSeq" id="WP_012642122.1">
    <property type="nucleotide sequence ID" value="NC_011959.1"/>
</dbReference>
<dbReference type="SMR" id="B9KZ23"/>
<dbReference type="STRING" id="309801.trd_0733"/>
<dbReference type="KEGG" id="tro:trd_0733"/>
<dbReference type="eggNOG" id="COG0190">
    <property type="taxonomic scope" value="Bacteria"/>
</dbReference>
<dbReference type="HOGENOM" id="CLU_034045_2_1_0"/>
<dbReference type="OrthoDB" id="9803580at2"/>
<dbReference type="UniPathway" id="UPA00193"/>
<dbReference type="Proteomes" id="UP000000447">
    <property type="component" value="Chromosome"/>
</dbReference>
<dbReference type="GO" id="GO:0005829">
    <property type="term" value="C:cytosol"/>
    <property type="evidence" value="ECO:0007669"/>
    <property type="project" value="TreeGrafter"/>
</dbReference>
<dbReference type="GO" id="GO:0004477">
    <property type="term" value="F:methenyltetrahydrofolate cyclohydrolase activity"/>
    <property type="evidence" value="ECO:0007669"/>
    <property type="project" value="UniProtKB-UniRule"/>
</dbReference>
<dbReference type="GO" id="GO:0004488">
    <property type="term" value="F:methylenetetrahydrofolate dehydrogenase (NADP+) activity"/>
    <property type="evidence" value="ECO:0007669"/>
    <property type="project" value="UniProtKB-UniRule"/>
</dbReference>
<dbReference type="GO" id="GO:0000105">
    <property type="term" value="P:L-histidine biosynthetic process"/>
    <property type="evidence" value="ECO:0007669"/>
    <property type="project" value="UniProtKB-KW"/>
</dbReference>
<dbReference type="GO" id="GO:0009086">
    <property type="term" value="P:methionine biosynthetic process"/>
    <property type="evidence" value="ECO:0007669"/>
    <property type="project" value="UniProtKB-KW"/>
</dbReference>
<dbReference type="GO" id="GO:0006164">
    <property type="term" value="P:purine nucleotide biosynthetic process"/>
    <property type="evidence" value="ECO:0007669"/>
    <property type="project" value="UniProtKB-KW"/>
</dbReference>
<dbReference type="GO" id="GO:0035999">
    <property type="term" value="P:tetrahydrofolate interconversion"/>
    <property type="evidence" value="ECO:0007669"/>
    <property type="project" value="UniProtKB-UniRule"/>
</dbReference>
<dbReference type="CDD" id="cd01080">
    <property type="entry name" value="NAD_bind_m-THF_DH_Cyclohyd"/>
    <property type="match status" value="1"/>
</dbReference>
<dbReference type="FunFam" id="3.40.50.720:FF:000094">
    <property type="entry name" value="Bifunctional protein FolD"/>
    <property type="match status" value="1"/>
</dbReference>
<dbReference type="Gene3D" id="3.40.50.10860">
    <property type="entry name" value="Leucine Dehydrogenase, chain A, domain 1"/>
    <property type="match status" value="1"/>
</dbReference>
<dbReference type="Gene3D" id="3.40.50.720">
    <property type="entry name" value="NAD(P)-binding Rossmann-like Domain"/>
    <property type="match status" value="1"/>
</dbReference>
<dbReference type="HAMAP" id="MF_01576">
    <property type="entry name" value="THF_DHG_CYH"/>
    <property type="match status" value="1"/>
</dbReference>
<dbReference type="InterPro" id="IPR046346">
    <property type="entry name" value="Aminoacid_DH-like_N_sf"/>
</dbReference>
<dbReference type="InterPro" id="IPR036291">
    <property type="entry name" value="NAD(P)-bd_dom_sf"/>
</dbReference>
<dbReference type="InterPro" id="IPR000672">
    <property type="entry name" value="THF_DH/CycHdrlase"/>
</dbReference>
<dbReference type="InterPro" id="IPR020630">
    <property type="entry name" value="THF_DH/CycHdrlase_cat_dom"/>
</dbReference>
<dbReference type="InterPro" id="IPR020631">
    <property type="entry name" value="THF_DH/CycHdrlase_NAD-bd_dom"/>
</dbReference>
<dbReference type="PANTHER" id="PTHR48099:SF5">
    <property type="entry name" value="C-1-TETRAHYDROFOLATE SYNTHASE, CYTOPLASMIC"/>
    <property type="match status" value="1"/>
</dbReference>
<dbReference type="PANTHER" id="PTHR48099">
    <property type="entry name" value="C-1-TETRAHYDROFOLATE SYNTHASE, CYTOPLASMIC-RELATED"/>
    <property type="match status" value="1"/>
</dbReference>
<dbReference type="Pfam" id="PF00763">
    <property type="entry name" value="THF_DHG_CYH"/>
    <property type="match status" value="1"/>
</dbReference>
<dbReference type="Pfam" id="PF02882">
    <property type="entry name" value="THF_DHG_CYH_C"/>
    <property type="match status" value="1"/>
</dbReference>
<dbReference type="PRINTS" id="PR00085">
    <property type="entry name" value="THFDHDRGNASE"/>
</dbReference>
<dbReference type="SUPFAM" id="SSF53223">
    <property type="entry name" value="Aminoacid dehydrogenase-like, N-terminal domain"/>
    <property type="match status" value="1"/>
</dbReference>
<dbReference type="SUPFAM" id="SSF51735">
    <property type="entry name" value="NAD(P)-binding Rossmann-fold domains"/>
    <property type="match status" value="1"/>
</dbReference>
<gene>
    <name evidence="1" type="primary">folD</name>
    <name type="ordered locus">trd_0733</name>
</gene>
<proteinExistence type="inferred from homology"/>